<evidence type="ECO:0000255" key="1">
    <source>
        <dbReference type="HAMAP-Rule" id="MF_01326"/>
    </source>
</evidence>
<evidence type="ECO:0000305" key="2"/>
<organism>
    <name type="scientific">Clostridium acetobutylicum (strain ATCC 824 / DSM 792 / JCM 1419 / IAM 19013 / LMG 5710 / NBRC 13948 / NRRL B-527 / VKM B-1787 / 2291 / W)</name>
    <dbReference type="NCBI Taxonomy" id="272562"/>
    <lineage>
        <taxon>Bacteria</taxon>
        <taxon>Bacillati</taxon>
        <taxon>Bacillota</taxon>
        <taxon>Clostridia</taxon>
        <taxon>Eubacteriales</taxon>
        <taxon>Clostridiaceae</taxon>
        <taxon>Clostridium</taxon>
    </lineage>
</organism>
<protein>
    <recommendedName>
        <fullName evidence="1">Large ribosomal subunit protein uL24</fullName>
    </recommendedName>
    <alternativeName>
        <fullName evidence="2">50S ribosomal protein L24</fullName>
    </alternativeName>
</protein>
<reference key="1">
    <citation type="journal article" date="2001" name="J. Bacteriol.">
        <title>Genome sequence and comparative analysis of the solvent-producing bacterium Clostridium acetobutylicum.</title>
        <authorList>
            <person name="Noelling J."/>
            <person name="Breton G."/>
            <person name="Omelchenko M.V."/>
            <person name="Makarova K.S."/>
            <person name="Zeng Q."/>
            <person name="Gibson R."/>
            <person name="Lee H.M."/>
            <person name="Dubois J."/>
            <person name="Qiu D."/>
            <person name="Hitti J."/>
            <person name="Wolf Y.I."/>
            <person name="Tatusov R.L."/>
            <person name="Sabathe F."/>
            <person name="Doucette-Stamm L.A."/>
            <person name="Soucaille P."/>
            <person name="Daly M.J."/>
            <person name="Bennett G.N."/>
            <person name="Koonin E.V."/>
            <person name="Smith D.R."/>
        </authorList>
    </citation>
    <scope>NUCLEOTIDE SEQUENCE [LARGE SCALE GENOMIC DNA]</scope>
    <source>
        <strain>ATCC 824 / DSM 792 / JCM 1419 / IAM 19013 / LMG 5710 / NBRC 13948 / NRRL B-527 / VKM B-1787 / 2291 / W</strain>
    </source>
</reference>
<comment type="function">
    <text evidence="1">One of two assembly initiator proteins, it binds directly to the 5'-end of the 23S rRNA, where it nucleates assembly of the 50S subunit.</text>
</comment>
<comment type="function">
    <text evidence="1">One of the proteins that surrounds the polypeptide exit tunnel on the outside of the subunit.</text>
</comment>
<comment type="subunit">
    <text evidence="1">Part of the 50S ribosomal subunit.</text>
</comment>
<comment type="similarity">
    <text evidence="1">Belongs to the universal ribosomal protein uL24 family.</text>
</comment>
<name>RL24_CLOAB</name>
<accession>Q97EI9</accession>
<keyword id="KW-1185">Reference proteome</keyword>
<keyword id="KW-0687">Ribonucleoprotein</keyword>
<keyword id="KW-0689">Ribosomal protein</keyword>
<keyword id="KW-0694">RNA-binding</keyword>
<keyword id="KW-0699">rRNA-binding</keyword>
<sequence>MANKIHVRKQDSVVVISGKDRGKIGEVLAVNPKKGTVLIKDVNVVVKHQKANKENMQGGLIKKEAPINSAKVMLYCTKCKTATRISKKVLDDGTKVRVCKKCGETF</sequence>
<proteinExistence type="inferred from homology"/>
<feature type="chain" id="PRO_0000130646" description="Large ribosomal subunit protein uL24">
    <location>
        <begin position="1"/>
        <end position="106"/>
    </location>
</feature>
<gene>
    <name evidence="1" type="primary">rplX</name>
    <name type="ordered locus">CA_C3122</name>
</gene>
<dbReference type="EMBL" id="AE001437">
    <property type="protein sequence ID" value="AAK81061.1"/>
    <property type="molecule type" value="Genomic_DNA"/>
</dbReference>
<dbReference type="PIR" id="B97284">
    <property type="entry name" value="B97284"/>
</dbReference>
<dbReference type="RefSeq" id="NP_349721.1">
    <property type="nucleotide sequence ID" value="NC_003030.1"/>
</dbReference>
<dbReference type="RefSeq" id="WP_010966401.1">
    <property type="nucleotide sequence ID" value="NC_003030.1"/>
</dbReference>
<dbReference type="SMR" id="Q97EI9"/>
<dbReference type="STRING" id="272562.CA_C3122"/>
<dbReference type="GeneID" id="44999609"/>
<dbReference type="KEGG" id="cac:CA_C3122"/>
<dbReference type="PATRIC" id="fig|272562.8.peg.3305"/>
<dbReference type="eggNOG" id="COG0198">
    <property type="taxonomic scope" value="Bacteria"/>
</dbReference>
<dbReference type="HOGENOM" id="CLU_093315_2_3_9"/>
<dbReference type="OrthoDB" id="9807419at2"/>
<dbReference type="Proteomes" id="UP000000814">
    <property type="component" value="Chromosome"/>
</dbReference>
<dbReference type="GO" id="GO:1990904">
    <property type="term" value="C:ribonucleoprotein complex"/>
    <property type="evidence" value="ECO:0007669"/>
    <property type="project" value="UniProtKB-KW"/>
</dbReference>
<dbReference type="GO" id="GO:0005840">
    <property type="term" value="C:ribosome"/>
    <property type="evidence" value="ECO:0007669"/>
    <property type="project" value="UniProtKB-KW"/>
</dbReference>
<dbReference type="GO" id="GO:0019843">
    <property type="term" value="F:rRNA binding"/>
    <property type="evidence" value="ECO:0007669"/>
    <property type="project" value="UniProtKB-UniRule"/>
</dbReference>
<dbReference type="GO" id="GO:0003735">
    <property type="term" value="F:structural constituent of ribosome"/>
    <property type="evidence" value="ECO:0007669"/>
    <property type="project" value="InterPro"/>
</dbReference>
<dbReference type="GO" id="GO:0006412">
    <property type="term" value="P:translation"/>
    <property type="evidence" value="ECO:0007669"/>
    <property type="project" value="UniProtKB-UniRule"/>
</dbReference>
<dbReference type="CDD" id="cd06089">
    <property type="entry name" value="KOW_RPL26"/>
    <property type="match status" value="1"/>
</dbReference>
<dbReference type="FunFam" id="2.30.30.30:FF:000004">
    <property type="entry name" value="50S ribosomal protein L24"/>
    <property type="match status" value="1"/>
</dbReference>
<dbReference type="Gene3D" id="2.30.30.30">
    <property type="match status" value="1"/>
</dbReference>
<dbReference type="HAMAP" id="MF_01326_B">
    <property type="entry name" value="Ribosomal_uL24_B"/>
    <property type="match status" value="1"/>
</dbReference>
<dbReference type="InterPro" id="IPR005824">
    <property type="entry name" value="KOW"/>
</dbReference>
<dbReference type="InterPro" id="IPR014722">
    <property type="entry name" value="Rib_uL2_dom2"/>
</dbReference>
<dbReference type="InterPro" id="IPR003256">
    <property type="entry name" value="Ribosomal_uL24"/>
</dbReference>
<dbReference type="InterPro" id="IPR041988">
    <property type="entry name" value="Ribosomal_uL24_KOW"/>
</dbReference>
<dbReference type="InterPro" id="IPR008991">
    <property type="entry name" value="Translation_prot_SH3-like_sf"/>
</dbReference>
<dbReference type="NCBIfam" id="TIGR01079">
    <property type="entry name" value="rplX_bact"/>
    <property type="match status" value="1"/>
</dbReference>
<dbReference type="PANTHER" id="PTHR12903">
    <property type="entry name" value="MITOCHONDRIAL RIBOSOMAL PROTEIN L24"/>
    <property type="match status" value="1"/>
</dbReference>
<dbReference type="Pfam" id="PF00467">
    <property type="entry name" value="KOW"/>
    <property type="match status" value="1"/>
</dbReference>
<dbReference type="Pfam" id="PF17136">
    <property type="entry name" value="ribosomal_L24"/>
    <property type="match status" value="1"/>
</dbReference>
<dbReference type="SMART" id="SM00739">
    <property type="entry name" value="KOW"/>
    <property type="match status" value="1"/>
</dbReference>
<dbReference type="SUPFAM" id="SSF50104">
    <property type="entry name" value="Translation proteins SH3-like domain"/>
    <property type="match status" value="1"/>
</dbReference>